<sequence>MSAPRTLYDKIWDDHLVDSQDDGTCLLYIDRHLVHEVTSPQAFEGLRMAGRKVRAPEKTLAVVDHNVPTSPDRHLGIKNEESRIQVEALARNAADFGVEYYSENDKRQGIVHIVGPEQGFTLPGMTIVCGDSHTSTHGAFGALAHGIGTSEVEHVLATQTLIQKKAKNMLVRVDGQLPPGVTAKDIILAIIGEIGTAGGTGHVIEFAGEAIRSLSMEGRMTVCNMTIEGGARAGLIAPDETTFEYIKDKPRAPKGEAWDRAVEYWKTLHTDEGAHYDRVVVLDAANLPPIVSWGSSPEDVVSVQGVVPNPDDIQDETKRTSKWRALDYMGLKPGTKITDIAIDRVFIGSCTNGRIEDLRAVAEVVEGRKVAPTVSAMIVPGSGLVKEQAEAEGLDKIFKEAGFDWREPGCSMCLAMNDDRLKPGERCASTSNRNFEGRQGFKGRTHLLSPAMAAAAAVAGHFVDIREWK</sequence>
<proteinExistence type="inferred from homology"/>
<keyword id="KW-0004">4Fe-4S</keyword>
<keyword id="KW-0028">Amino-acid biosynthesis</keyword>
<keyword id="KW-0100">Branched-chain amino acid biosynthesis</keyword>
<keyword id="KW-0408">Iron</keyword>
<keyword id="KW-0411">Iron-sulfur</keyword>
<keyword id="KW-0432">Leucine biosynthesis</keyword>
<keyword id="KW-0456">Lyase</keyword>
<keyword id="KW-0479">Metal-binding</keyword>
<keyword id="KW-1185">Reference proteome</keyword>
<accession>Q92L76</accession>
<accession>Q9EV53</accession>
<evidence type="ECO:0000255" key="1">
    <source>
        <dbReference type="HAMAP-Rule" id="MF_01026"/>
    </source>
</evidence>
<evidence type="ECO:0000305" key="2"/>
<comment type="function">
    <text evidence="1">Catalyzes the isomerization between 2-isopropylmalate and 3-isopropylmalate, via the formation of 2-isopropylmaleate.</text>
</comment>
<comment type="catalytic activity">
    <reaction evidence="1">
        <text>(2R,3S)-3-isopropylmalate = (2S)-2-isopropylmalate</text>
        <dbReference type="Rhea" id="RHEA:32287"/>
        <dbReference type="ChEBI" id="CHEBI:1178"/>
        <dbReference type="ChEBI" id="CHEBI:35121"/>
        <dbReference type="EC" id="4.2.1.33"/>
    </reaction>
</comment>
<comment type="cofactor">
    <cofactor evidence="1">
        <name>[4Fe-4S] cluster</name>
        <dbReference type="ChEBI" id="CHEBI:49883"/>
    </cofactor>
    <text evidence="1">Binds 1 [4Fe-4S] cluster per subunit.</text>
</comment>
<comment type="pathway">
    <text evidence="1">Amino-acid biosynthesis; L-leucine biosynthesis; L-leucine from 3-methyl-2-oxobutanoate: step 2/4.</text>
</comment>
<comment type="subunit">
    <text evidence="1">Heterodimer of LeuC and LeuD.</text>
</comment>
<comment type="similarity">
    <text evidence="1">Belongs to the aconitase/IPM isomerase family. LeuC type 1 subfamily.</text>
</comment>
<gene>
    <name evidence="1" type="primary">leuC</name>
    <name type="ordered locus">R03206</name>
    <name type="ORF">SMc03823</name>
</gene>
<reference key="1">
    <citation type="journal article" date="2001" name="Proc. Natl. Acad. Sci. U.S.A.">
        <title>Analysis of the chromosome sequence of the legume symbiont Sinorhizobium meliloti strain 1021.</title>
        <authorList>
            <person name="Capela D."/>
            <person name="Barloy-Hubler F."/>
            <person name="Gouzy J."/>
            <person name="Bothe G."/>
            <person name="Ampe F."/>
            <person name="Batut J."/>
            <person name="Boistard P."/>
            <person name="Becker A."/>
            <person name="Boutry M."/>
            <person name="Cadieu E."/>
            <person name="Dreano S."/>
            <person name="Gloux S."/>
            <person name="Godrie T."/>
            <person name="Goffeau A."/>
            <person name="Kahn D."/>
            <person name="Kiss E."/>
            <person name="Lelaure V."/>
            <person name="Masuy D."/>
            <person name="Pohl T."/>
            <person name="Portetelle D."/>
            <person name="Puehler A."/>
            <person name="Purnelle B."/>
            <person name="Ramsperger U."/>
            <person name="Renard C."/>
            <person name="Thebault P."/>
            <person name="Vandenbol M."/>
            <person name="Weidner S."/>
            <person name="Galibert F."/>
        </authorList>
    </citation>
    <scope>NUCLEOTIDE SEQUENCE [LARGE SCALE GENOMIC DNA]</scope>
    <source>
        <strain>1021</strain>
    </source>
</reference>
<reference key="2">
    <citation type="journal article" date="2001" name="Science">
        <title>The composite genome of the legume symbiont Sinorhizobium meliloti.</title>
        <authorList>
            <person name="Galibert F."/>
            <person name="Finan T.M."/>
            <person name="Long S.R."/>
            <person name="Puehler A."/>
            <person name="Abola P."/>
            <person name="Ampe F."/>
            <person name="Barloy-Hubler F."/>
            <person name="Barnett M.J."/>
            <person name="Becker A."/>
            <person name="Boistard P."/>
            <person name="Bothe G."/>
            <person name="Boutry M."/>
            <person name="Bowser L."/>
            <person name="Buhrmester J."/>
            <person name="Cadieu E."/>
            <person name="Capela D."/>
            <person name="Chain P."/>
            <person name="Cowie A."/>
            <person name="Davis R.W."/>
            <person name="Dreano S."/>
            <person name="Federspiel N.A."/>
            <person name="Fisher R.F."/>
            <person name="Gloux S."/>
            <person name="Godrie T."/>
            <person name="Goffeau A."/>
            <person name="Golding B."/>
            <person name="Gouzy J."/>
            <person name="Gurjal M."/>
            <person name="Hernandez-Lucas I."/>
            <person name="Hong A."/>
            <person name="Huizar L."/>
            <person name="Hyman R.W."/>
            <person name="Jones T."/>
            <person name="Kahn D."/>
            <person name="Kahn M.L."/>
            <person name="Kalman S."/>
            <person name="Keating D.H."/>
            <person name="Kiss E."/>
            <person name="Komp C."/>
            <person name="Lelaure V."/>
            <person name="Masuy D."/>
            <person name="Palm C."/>
            <person name="Peck M.C."/>
            <person name="Pohl T.M."/>
            <person name="Portetelle D."/>
            <person name="Purnelle B."/>
            <person name="Ramsperger U."/>
            <person name="Surzycki R."/>
            <person name="Thebault P."/>
            <person name="Vandenbol M."/>
            <person name="Vorhoelter F.J."/>
            <person name="Weidner S."/>
            <person name="Wells D.H."/>
            <person name="Wong K."/>
            <person name="Yeh K.-C."/>
            <person name="Batut J."/>
        </authorList>
    </citation>
    <scope>NUCLEOTIDE SEQUENCE [LARGE SCALE GENOMIC DNA]</scope>
    <source>
        <strain>1021</strain>
    </source>
</reference>
<reference key="3">
    <citation type="journal article" date="2002" name="Arch. Microbiol.">
        <title>Involvement of the Sinorhizobium meliloti leuA gene in activation of nodulation genes by NodD1 and luteolin.</title>
        <authorList>
            <person name="Sanjuan-Pinilla J.M."/>
            <person name="Munoz S."/>
            <person name="Nogales J."/>
            <person name="Olivares J."/>
            <person name="Sanjuan J."/>
        </authorList>
    </citation>
    <scope>NUCLEOTIDE SEQUENCE [GENOMIC DNA] OF 22-469</scope>
    <source>
        <strain>GR4</strain>
    </source>
</reference>
<feature type="chain" id="PRO_0000076796" description="3-isopropylmalate dehydratase large subunit">
    <location>
        <begin position="1"/>
        <end position="469"/>
    </location>
</feature>
<feature type="binding site" evidence="1">
    <location>
        <position position="350"/>
    </location>
    <ligand>
        <name>[4Fe-4S] cluster</name>
        <dbReference type="ChEBI" id="CHEBI:49883"/>
    </ligand>
</feature>
<feature type="binding site" evidence="1">
    <location>
        <position position="410"/>
    </location>
    <ligand>
        <name>[4Fe-4S] cluster</name>
        <dbReference type="ChEBI" id="CHEBI:49883"/>
    </ligand>
</feature>
<feature type="binding site" evidence="1">
    <location>
        <position position="413"/>
    </location>
    <ligand>
        <name>[4Fe-4S] cluster</name>
        <dbReference type="ChEBI" id="CHEBI:49883"/>
    </ligand>
</feature>
<feature type="sequence conflict" description="In Ref. 3; CAC14578." evidence="2" ref="3">
    <original>R</original>
    <variation>C</variation>
    <location>
        <position position="31"/>
    </location>
</feature>
<feature type="sequence conflict" description="In Ref. 3; CAC14578." evidence="2" ref="3">
    <original>F</original>
    <variation>L</variation>
    <location>
        <position position="96"/>
    </location>
</feature>
<feature type="sequence conflict" description="In Ref. 3; CAC14578." evidence="2" ref="3">
    <original>T</original>
    <variation>M</variation>
    <location>
        <position position="270"/>
    </location>
</feature>
<feature type="sequence conflict" description="In Ref. 3; CAC14578." evidence="2" ref="3">
    <original>A</original>
    <variation>S</variation>
    <location>
        <position position="371"/>
    </location>
</feature>
<name>LEUC_RHIME</name>
<dbReference type="EC" id="4.2.1.33" evidence="1"/>
<dbReference type="EMBL" id="AL591688">
    <property type="protein sequence ID" value="CAC47785.1"/>
    <property type="molecule type" value="Genomic_DNA"/>
</dbReference>
<dbReference type="EMBL" id="AJ296268">
    <property type="protein sequence ID" value="CAC14578.1"/>
    <property type="molecule type" value="Genomic_DNA"/>
</dbReference>
<dbReference type="RefSeq" id="NP_387312.1">
    <property type="nucleotide sequence ID" value="NC_003047.1"/>
</dbReference>
<dbReference type="RefSeq" id="WP_003529677.1">
    <property type="nucleotide sequence ID" value="NC_003047.1"/>
</dbReference>
<dbReference type="SMR" id="Q92L76"/>
<dbReference type="EnsemblBacteria" id="CAC47785">
    <property type="protein sequence ID" value="CAC47785"/>
    <property type="gene ID" value="SMc03823"/>
</dbReference>
<dbReference type="GeneID" id="89574182"/>
<dbReference type="KEGG" id="sme:SMc03823"/>
<dbReference type="PATRIC" id="fig|266834.11.peg.4757"/>
<dbReference type="eggNOG" id="COG0065">
    <property type="taxonomic scope" value="Bacteria"/>
</dbReference>
<dbReference type="HOGENOM" id="CLU_006714_3_4_5"/>
<dbReference type="OrthoDB" id="9802769at2"/>
<dbReference type="UniPathway" id="UPA00048">
    <property type="reaction ID" value="UER00071"/>
</dbReference>
<dbReference type="Proteomes" id="UP000001976">
    <property type="component" value="Chromosome"/>
</dbReference>
<dbReference type="GO" id="GO:0003861">
    <property type="term" value="F:3-isopropylmalate dehydratase activity"/>
    <property type="evidence" value="ECO:0007669"/>
    <property type="project" value="UniProtKB-UniRule"/>
</dbReference>
<dbReference type="GO" id="GO:0051539">
    <property type="term" value="F:4 iron, 4 sulfur cluster binding"/>
    <property type="evidence" value="ECO:0007669"/>
    <property type="project" value="UniProtKB-KW"/>
</dbReference>
<dbReference type="GO" id="GO:0046872">
    <property type="term" value="F:metal ion binding"/>
    <property type="evidence" value="ECO:0007669"/>
    <property type="project" value="UniProtKB-KW"/>
</dbReference>
<dbReference type="GO" id="GO:0009098">
    <property type="term" value="P:L-leucine biosynthetic process"/>
    <property type="evidence" value="ECO:0007669"/>
    <property type="project" value="UniProtKB-UniRule"/>
</dbReference>
<dbReference type="CDD" id="cd01583">
    <property type="entry name" value="IPMI"/>
    <property type="match status" value="1"/>
</dbReference>
<dbReference type="FunFam" id="3.30.499.10:FF:000006">
    <property type="entry name" value="3-isopropylmalate dehydratase large subunit"/>
    <property type="match status" value="1"/>
</dbReference>
<dbReference type="FunFam" id="3.30.499.10:FF:000007">
    <property type="entry name" value="3-isopropylmalate dehydratase large subunit"/>
    <property type="match status" value="1"/>
</dbReference>
<dbReference type="Gene3D" id="3.30.499.10">
    <property type="entry name" value="Aconitase, domain 3"/>
    <property type="match status" value="2"/>
</dbReference>
<dbReference type="HAMAP" id="MF_01026">
    <property type="entry name" value="LeuC_type1"/>
    <property type="match status" value="1"/>
</dbReference>
<dbReference type="InterPro" id="IPR004430">
    <property type="entry name" value="3-IsopropMal_deHydase_lsu"/>
</dbReference>
<dbReference type="InterPro" id="IPR015931">
    <property type="entry name" value="Acnase/IPM_dHydase_lsu_aba_1/3"/>
</dbReference>
<dbReference type="InterPro" id="IPR001030">
    <property type="entry name" value="Acoase/IPM_deHydtase_lsu_aba"/>
</dbReference>
<dbReference type="InterPro" id="IPR018136">
    <property type="entry name" value="Aconitase_4Fe-4S_BS"/>
</dbReference>
<dbReference type="InterPro" id="IPR036008">
    <property type="entry name" value="Aconitase_4Fe-4S_dom"/>
</dbReference>
<dbReference type="InterPro" id="IPR050067">
    <property type="entry name" value="IPM_dehydratase_rel_enz"/>
</dbReference>
<dbReference type="InterPro" id="IPR033941">
    <property type="entry name" value="IPMI_cat"/>
</dbReference>
<dbReference type="NCBIfam" id="TIGR00170">
    <property type="entry name" value="leuC"/>
    <property type="match status" value="1"/>
</dbReference>
<dbReference type="NCBIfam" id="NF004016">
    <property type="entry name" value="PRK05478.1"/>
    <property type="match status" value="1"/>
</dbReference>
<dbReference type="NCBIfam" id="NF009116">
    <property type="entry name" value="PRK12466.1"/>
    <property type="match status" value="1"/>
</dbReference>
<dbReference type="PANTHER" id="PTHR43822:SF9">
    <property type="entry name" value="3-ISOPROPYLMALATE DEHYDRATASE"/>
    <property type="match status" value="1"/>
</dbReference>
<dbReference type="PANTHER" id="PTHR43822">
    <property type="entry name" value="HOMOACONITASE, MITOCHONDRIAL-RELATED"/>
    <property type="match status" value="1"/>
</dbReference>
<dbReference type="Pfam" id="PF00330">
    <property type="entry name" value="Aconitase"/>
    <property type="match status" value="1"/>
</dbReference>
<dbReference type="PRINTS" id="PR00415">
    <property type="entry name" value="ACONITASE"/>
</dbReference>
<dbReference type="SUPFAM" id="SSF53732">
    <property type="entry name" value="Aconitase iron-sulfur domain"/>
    <property type="match status" value="1"/>
</dbReference>
<dbReference type="PROSITE" id="PS00450">
    <property type="entry name" value="ACONITASE_1"/>
    <property type="match status" value="1"/>
</dbReference>
<dbReference type="PROSITE" id="PS01244">
    <property type="entry name" value="ACONITASE_2"/>
    <property type="match status" value="1"/>
</dbReference>
<protein>
    <recommendedName>
        <fullName evidence="1">3-isopropylmalate dehydratase large subunit</fullName>
        <ecNumber evidence="1">4.2.1.33</ecNumber>
    </recommendedName>
    <alternativeName>
        <fullName evidence="1">Alpha-IPM isomerase</fullName>
        <shortName evidence="1">IPMI</shortName>
    </alternativeName>
    <alternativeName>
        <fullName evidence="1">Isopropylmalate isomerase</fullName>
    </alternativeName>
</protein>
<organism>
    <name type="scientific">Rhizobium meliloti (strain 1021)</name>
    <name type="common">Ensifer meliloti</name>
    <name type="synonym">Sinorhizobium meliloti</name>
    <dbReference type="NCBI Taxonomy" id="266834"/>
    <lineage>
        <taxon>Bacteria</taxon>
        <taxon>Pseudomonadati</taxon>
        <taxon>Pseudomonadota</taxon>
        <taxon>Alphaproteobacteria</taxon>
        <taxon>Hyphomicrobiales</taxon>
        <taxon>Rhizobiaceae</taxon>
        <taxon>Sinorhizobium/Ensifer group</taxon>
        <taxon>Sinorhizobium</taxon>
    </lineage>
</organism>